<name>ACYP1_MOUSE</name>
<organism>
    <name type="scientific">Mus musculus</name>
    <name type="common">Mouse</name>
    <dbReference type="NCBI Taxonomy" id="10090"/>
    <lineage>
        <taxon>Eukaryota</taxon>
        <taxon>Metazoa</taxon>
        <taxon>Chordata</taxon>
        <taxon>Craniata</taxon>
        <taxon>Vertebrata</taxon>
        <taxon>Euteleostomi</taxon>
        <taxon>Mammalia</taxon>
        <taxon>Eutheria</taxon>
        <taxon>Euarchontoglires</taxon>
        <taxon>Glires</taxon>
        <taxon>Rodentia</taxon>
        <taxon>Myomorpha</taxon>
        <taxon>Muroidea</taxon>
        <taxon>Muridae</taxon>
        <taxon>Murinae</taxon>
        <taxon>Mus</taxon>
        <taxon>Mus</taxon>
    </lineage>
</organism>
<reference key="1">
    <citation type="journal article" date="2005" name="Science">
        <title>The transcriptional landscape of the mammalian genome.</title>
        <authorList>
            <person name="Carninci P."/>
            <person name="Kasukawa T."/>
            <person name="Katayama S."/>
            <person name="Gough J."/>
            <person name="Frith M.C."/>
            <person name="Maeda N."/>
            <person name="Oyama R."/>
            <person name="Ravasi T."/>
            <person name="Lenhard B."/>
            <person name="Wells C."/>
            <person name="Kodzius R."/>
            <person name="Shimokawa K."/>
            <person name="Bajic V.B."/>
            <person name="Brenner S.E."/>
            <person name="Batalov S."/>
            <person name="Forrest A.R."/>
            <person name="Zavolan M."/>
            <person name="Davis M.J."/>
            <person name="Wilming L.G."/>
            <person name="Aidinis V."/>
            <person name="Allen J.E."/>
            <person name="Ambesi-Impiombato A."/>
            <person name="Apweiler R."/>
            <person name="Aturaliya R.N."/>
            <person name="Bailey T.L."/>
            <person name="Bansal M."/>
            <person name="Baxter L."/>
            <person name="Beisel K.W."/>
            <person name="Bersano T."/>
            <person name="Bono H."/>
            <person name="Chalk A.M."/>
            <person name="Chiu K.P."/>
            <person name="Choudhary V."/>
            <person name="Christoffels A."/>
            <person name="Clutterbuck D.R."/>
            <person name="Crowe M.L."/>
            <person name="Dalla E."/>
            <person name="Dalrymple B.P."/>
            <person name="de Bono B."/>
            <person name="Della Gatta G."/>
            <person name="di Bernardo D."/>
            <person name="Down T."/>
            <person name="Engstrom P."/>
            <person name="Fagiolini M."/>
            <person name="Faulkner G."/>
            <person name="Fletcher C.F."/>
            <person name="Fukushima T."/>
            <person name="Furuno M."/>
            <person name="Futaki S."/>
            <person name="Gariboldi M."/>
            <person name="Georgii-Hemming P."/>
            <person name="Gingeras T.R."/>
            <person name="Gojobori T."/>
            <person name="Green R.E."/>
            <person name="Gustincich S."/>
            <person name="Harbers M."/>
            <person name="Hayashi Y."/>
            <person name="Hensch T.K."/>
            <person name="Hirokawa N."/>
            <person name="Hill D."/>
            <person name="Huminiecki L."/>
            <person name="Iacono M."/>
            <person name="Ikeo K."/>
            <person name="Iwama A."/>
            <person name="Ishikawa T."/>
            <person name="Jakt M."/>
            <person name="Kanapin A."/>
            <person name="Katoh M."/>
            <person name="Kawasawa Y."/>
            <person name="Kelso J."/>
            <person name="Kitamura H."/>
            <person name="Kitano H."/>
            <person name="Kollias G."/>
            <person name="Krishnan S.P."/>
            <person name="Kruger A."/>
            <person name="Kummerfeld S.K."/>
            <person name="Kurochkin I.V."/>
            <person name="Lareau L.F."/>
            <person name="Lazarevic D."/>
            <person name="Lipovich L."/>
            <person name="Liu J."/>
            <person name="Liuni S."/>
            <person name="McWilliam S."/>
            <person name="Madan Babu M."/>
            <person name="Madera M."/>
            <person name="Marchionni L."/>
            <person name="Matsuda H."/>
            <person name="Matsuzawa S."/>
            <person name="Miki H."/>
            <person name="Mignone F."/>
            <person name="Miyake S."/>
            <person name="Morris K."/>
            <person name="Mottagui-Tabar S."/>
            <person name="Mulder N."/>
            <person name="Nakano N."/>
            <person name="Nakauchi H."/>
            <person name="Ng P."/>
            <person name="Nilsson R."/>
            <person name="Nishiguchi S."/>
            <person name="Nishikawa S."/>
            <person name="Nori F."/>
            <person name="Ohara O."/>
            <person name="Okazaki Y."/>
            <person name="Orlando V."/>
            <person name="Pang K.C."/>
            <person name="Pavan W.J."/>
            <person name="Pavesi G."/>
            <person name="Pesole G."/>
            <person name="Petrovsky N."/>
            <person name="Piazza S."/>
            <person name="Reed J."/>
            <person name="Reid J.F."/>
            <person name="Ring B.Z."/>
            <person name="Ringwald M."/>
            <person name="Rost B."/>
            <person name="Ruan Y."/>
            <person name="Salzberg S.L."/>
            <person name="Sandelin A."/>
            <person name="Schneider C."/>
            <person name="Schoenbach C."/>
            <person name="Sekiguchi K."/>
            <person name="Semple C.A."/>
            <person name="Seno S."/>
            <person name="Sessa L."/>
            <person name="Sheng Y."/>
            <person name="Shibata Y."/>
            <person name="Shimada H."/>
            <person name="Shimada K."/>
            <person name="Silva D."/>
            <person name="Sinclair B."/>
            <person name="Sperling S."/>
            <person name="Stupka E."/>
            <person name="Sugiura K."/>
            <person name="Sultana R."/>
            <person name="Takenaka Y."/>
            <person name="Taki K."/>
            <person name="Tammoja K."/>
            <person name="Tan S.L."/>
            <person name="Tang S."/>
            <person name="Taylor M.S."/>
            <person name="Tegner J."/>
            <person name="Teichmann S.A."/>
            <person name="Ueda H.R."/>
            <person name="van Nimwegen E."/>
            <person name="Verardo R."/>
            <person name="Wei C.L."/>
            <person name="Yagi K."/>
            <person name="Yamanishi H."/>
            <person name="Zabarovsky E."/>
            <person name="Zhu S."/>
            <person name="Zimmer A."/>
            <person name="Hide W."/>
            <person name="Bult C."/>
            <person name="Grimmond S.M."/>
            <person name="Teasdale R.D."/>
            <person name="Liu E.T."/>
            <person name="Brusic V."/>
            <person name="Quackenbush J."/>
            <person name="Wahlestedt C."/>
            <person name="Mattick J.S."/>
            <person name="Hume D.A."/>
            <person name="Kai C."/>
            <person name="Sasaki D."/>
            <person name="Tomaru Y."/>
            <person name="Fukuda S."/>
            <person name="Kanamori-Katayama M."/>
            <person name="Suzuki M."/>
            <person name="Aoki J."/>
            <person name="Arakawa T."/>
            <person name="Iida J."/>
            <person name="Imamura K."/>
            <person name="Itoh M."/>
            <person name="Kato T."/>
            <person name="Kawaji H."/>
            <person name="Kawagashira N."/>
            <person name="Kawashima T."/>
            <person name="Kojima M."/>
            <person name="Kondo S."/>
            <person name="Konno H."/>
            <person name="Nakano K."/>
            <person name="Ninomiya N."/>
            <person name="Nishio T."/>
            <person name="Okada M."/>
            <person name="Plessy C."/>
            <person name="Shibata K."/>
            <person name="Shiraki T."/>
            <person name="Suzuki S."/>
            <person name="Tagami M."/>
            <person name="Waki K."/>
            <person name="Watahiki A."/>
            <person name="Okamura-Oho Y."/>
            <person name="Suzuki H."/>
            <person name="Kawai J."/>
            <person name="Hayashizaki Y."/>
        </authorList>
    </citation>
    <scope>NUCLEOTIDE SEQUENCE [LARGE SCALE MRNA]</scope>
    <source>
        <strain>C57BL/6J</strain>
        <tissue>Testis</tissue>
    </source>
</reference>
<reference key="2">
    <citation type="journal article" date="2004" name="Genome Res.">
        <title>The status, quality, and expansion of the NIH full-length cDNA project: the Mammalian Gene Collection (MGC).</title>
        <authorList>
            <consortium name="The MGC Project Team"/>
        </authorList>
    </citation>
    <scope>NUCLEOTIDE SEQUENCE [LARGE SCALE MRNA]</scope>
    <source>
        <tissue>Brain</tissue>
        <tissue>Testis</tissue>
    </source>
</reference>
<reference key="3">
    <citation type="journal article" date="2010" name="Cell">
        <title>A tissue-specific atlas of mouse protein phosphorylation and expression.</title>
        <authorList>
            <person name="Huttlin E.L."/>
            <person name="Jedrychowski M.P."/>
            <person name="Elias J.E."/>
            <person name="Goswami T."/>
            <person name="Rad R."/>
            <person name="Beausoleil S.A."/>
            <person name="Villen J."/>
            <person name="Haas W."/>
            <person name="Sowa M.E."/>
            <person name="Gygi S.P."/>
        </authorList>
    </citation>
    <scope>IDENTIFICATION BY MASS SPECTROMETRY [LARGE SCALE ANALYSIS]</scope>
    <source>
        <tissue>Brain</tissue>
        <tissue>Brown adipose tissue</tissue>
        <tissue>Heart</tissue>
        <tissue>Kidney</tissue>
        <tissue>Liver</tissue>
        <tissue>Lung</tissue>
        <tissue>Pancreas</tissue>
        <tissue>Spleen</tissue>
        <tissue>Testis</tissue>
    </source>
</reference>
<keyword id="KW-0007">Acetylation</keyword>
<keyword id="KW-0378">Hydrolase</keyword>
<keyword id="KW-1185">Reference proteome</keyword>
<protein>
    <recommendedName>
        <fullName>Acylphosphatase-1</fullName>
        <ecNumber evidence="1">3.6.1.7</ecNumber>
    </recommendedName>
    <alternativeName>
        <fullName>Acylphosphatase, organ-common type isozyme</fullName>
    </alternativeName>
    <alternativeName>
        <fullName>Acylphosphate phosphohydrolase 1</fullName>
    </alternativeName>
</protein>
<proteinExistence type="evidence at protein level"/>
<accession>P56376</accession>
<accession>Q0VG40</accession>
<accession>Q545K8</accession>
<accession>Q6P8S7</accession>
<sequence length="99" mass="11241">MAEGDTLVSVDYEIFGKVQGVFFRKYTQAEGKKLGLVGWVQNTDRGTVQGQLQGPVSKVRFMQQWLETRGSPKSHIDRANFNNEKVIANLDYSDFQIVK</sequence>
<gene>
    <name type="primary">Acyp1</name>
    <name type="synonym">Acype</name>
</gene>
<feature type="initiator methionine" description="Removed" evidence="1">
    <location>
        <position position="1"/>
    </location>
</feature>
<feature type="chain" id="PRO_0000158536" description="Acylphosphatase-1">
    <location>
        <begin position="2"/>
        <end position="99"/>
    </location>
</feature>
<feature type="domain" description="Acylphosphatase-like" evidence="2">
    <location>
        <begin position="9"/>
        <end position="99"/>
    </location>
</feature>
<feature type="active site" evidence="2">
    <location>
        <position position="24"/>
    </location>
</feature>
<feature type="active site" evidence="2">
    <location>
        <position position="42"/>
    </location>
</feature>
<feature type="modified residue" description="N-acetylalanine" evidence="1">
    <location>
        <position position="2"/>
    </location>
</feature>
<comment type="catalytic activity">
    <reaction evidence="1">
        <text>an acyl phosphate + H2O = a carboxylate + phosphate + H(+)</text>
        <dbReference type="Rhea" id="RHEA:14965"/>
        <dbReference type="ChEBI" id="CHEBI:15377"/>
        <dbReference type="ChEBI" id="CHEBI:15378"/>
        <dbReference type="ChEBI" id="CHEBI:29067"/>
        <dbReference type="ChEBI" id="CHEBI:43474"/>
        <dbReference type="ChEBI" id="CHEBI:59918"/>
        <dbReference type="EC" id="3.6.1.7"/>
    </reaction>
</comment>
<comment type="similarity">
    <text evidence="3">Belongs to the acylphosphatase family.</text>
</comment>
<evidence type="ECO:0000250" key="1">
    <source>
        <dbReference type="UniProtKB" id="P07311"/>
    </source>
</evidence>
<evidence type="ECO:0000255" key="2">
    <source>
        <dbReference type="PROSITE-ProRule" id="PRU00520"/>
    </source>
</evidence>
<evidence type="ECO:0000305" key="3"/>
<dbReference type="EC" id="3.6.1.7" evidence="1"/>
<dbReference type="EMBL" id="AK004176">
    <property type="protein sequence ID" value="BAB23208.1"/>
    <property type="molecule type" value="mRNA"/>
</dbReference>
<dbReference type="EMBL" id="AK007244">
    <property type="protein sequence ID" value="BAB24911.1"/>
    <property type="molecule type" value="mRNA"/>
</dbReference>
<dbReference type="EMBL" id="AK018832">
    <property type="protein sequence ID" value="BAB31454.1"/>
    <property type="molecule type" value="mRNA"/>
</dbReference>
<dbReference type="EMBL" id="BC061088">
    <property type="protein sequence ID" value="AAH61088.2"/>
    <property type="molecule type" value="mRNA"/>
</dbReference>
<dbReference type="EMBL" id="BC116781">
    <property type="protein sequence ID" value="AAI16782.1"/>
    <property type="molecule type" value="mRNA"/>
</dbReference>
<dbReference type="EMBL" id="BC116783">
    <property type="protein sequence ID" value="AAI16784.1"/>
    <property type="molecule type" value="mRNA"/>
</dbReference>
<dbReference type="CCDS" id="CCDS26055.1"/>
<dbReference type="RefSeq" id="NP_079697.1">
    <property type="nucleotide sequence ID" value="NM_025421.3"/>
</dbReference>
<dbReference type="SMR" id="P56376"/>
<dbReference type="BioGRID" id="211296">
    <property type="interactions" value="1"/>
</dbReference>
<dbReference type="FunCoup" id="P56376">
    <property type="interactions" value="272"/>
</dbReference>
<dbReference type="STRING" id="10090.ENSMUSP00000113161"/>
<dbReference type="iPTMnet" id="P56376"/>
<dbReference type="PhosphoSitePlus" id="P56376"/>
<dbReference type="REPRODUCTION-2DPAGE" id="IPI00420440"/>
<dbReference type="CPTAC" id="non-CPTAC-3630"/>
<dbReference type="jPOST" id="P56376"/>
<dbReference type="PaxDb" id="10090-ENSMUSP00000008966"/>
<dbReference type="ProteomicsDB" id="285754"/>
<dbReference type="Pumba" id="P56376"/>
<dbReference type="Antibodypedia" id="25782">
    <property type="antibodies" value="194 antibodies from 30 providers"/>
</dbReference>
<dbReference type="DNASU" id="66204"/>
<dbReference type="Ensembl" id="ENSMUST00000008966.13">
    <property type="protein sequence ID" value="ENSMUSP00000008966.7"/>
    <property type="gene ID" value="ENSMUSG00000008822.16"/>
</dbReference>
<dbReference type="Ensembl" id="ENSMUST00000117138.3">
    <property type="protein sequence ID" value="ENSMUSP00000113161.3"/>
    <property type="gene ID" value="ENSMUSG00000008822.16"/>
</dbReference>
<dbReference type="GeneID" id="66204"/>
<dbReference type="KEGG" id="mmu:66204"/>
<dbReference type="UCSC" id="uc007ogu.2">
    <property type="organism name" value="mouse"/>
</dbReference>
<dbReference type="AGR" id="MGI:1913454"/>
<dbReference type="CTD" id="97"/>
<dbReference type="MGI" id="MGI:1913454">
    <property type="gene designation" value="Acyp1"/>
</dbReference>
<dbReference type="VEuPathDB" id="HostDB:ENSMUSG00000008822"/>
<dbReference type="eggNOG" id="KOG3360">
    <property type="taxonomic scope" value="Eukaryota"/>
</dbReference>
<dbReference type="GeneTree" id="ENSGT00390000011103"/>
<dbReference type="HOGENOM" id="CLU_141932_0_1_1"/>
<dbReference type="InParanoid" id="P56376"/>
<dbReference type="PhylomeDB" id="P56376"/>
<dbReference type="TreeFam" id="TF300288"/>
<dbReference type="BioGRID-ORCS" id="66204">
    <property type="hits" value="3 hits in 77 CRISPR screens"/>
</dbReference>
<dbReference type="ChiTaRS" id="Acyp1">
    <property type="organism name" value="mouse"/>
</dbReference>
<dbReference type="PRO" id="PR:P56376"/>
<dbReference type="Proteomes" id="UP000000589">
    <property type="component" value="Chromosome 12"/>
</dbReference>
<dbReference type="RNAct" id="P56376">
    <property type="molecule type" value="protein"/>
</dbReference>
<dbReference type="Bgee" id="ENSMUSG00000008822">
    <property type="expression patterns" value="Expressed in seminiferous tubule of testis and 270 other cell types or tissues"/>
</dbReference>
<dbReference type="ExpressionAtlas" id="P56376">
    <property type="expression patterns" value="baseline and differential"/>
</dbReference>
<dbReference type="GO" id="GO:0003998">
    <property type="term" value="F:acylphosphatase activity"/>
    <property type="evidence" value="ECO:0007669"/>
    <property type="project" value="UniProtKB-EC"/>
</dbReference>
<dbReference type="FunFam" id="3.30.70.100:FF:000011">
    <property type="entry name" value="Acylphosphatase"/>
    <property type="match status" value="1"/>
</dbReference>
<dbReference type="Gene3D" id="3.30.70.100">
    <property type="match status" value="1"/>
</dbReference>
<dbReference type="InterPro" id="IPR020456">
    <property type="entry name" value="Acylphosphatase"/>
</dbReference>
<dbReference type="InterPro" id="IPR001792">
    <property type="entry name" value="Acylphosphatase-like_dom"/>
</dbReference>
<dbReference type="InterPro" id="IPR036046">
    <property type="entry name" value="Acylphosphatase-like_dom_sf"/>
</dbReference>
<dbReference type="InterPro" id="IPR017968">
    <property type="entry name" value="Acylphosphatase_CS"/>
</dbReference>
<dbReference type="PANTHER" id="PTHR10029">
    <property type="entry name" value="ACYLPHOSPHATASE"/>
    <property type="match status" value="1"/>
</dbReference>
<dbReference type="PANTHER" id="PTHR10029:SF21">
    <property type="entry name" value="ACYLPHOSPHATASE-1"/>
    <property type="match status" value="1"/>
</dbReference>
<dbReference type="Pfam" id="PF00708">
    <property type="entry name" value="Acylphosphatase"/>
    <property type="match status" value="1"/>
</dbReference>
<dbReference type="PRINTS" id="PR00112">
    <property type="entry name" value="ACYLPHPHTASE"/>
</dbReference>
<dbReference type="SUPFAM" id="SSF54975">
    <property type="entry name" value="Acylphosphatase/BLUF domain-like"/>
    <property type="match status" value="1"/>
</dbReference>
<dbReference type="PROSITE" id="PS00150">
    <property type="entry name" value="ACYLPHOSPHATASE_1"/>
    <property type="match status" value="1"/>
</dbReference>
<dbReference type="PROSITE" id="PS00151">
    <property type="entry name" value="ACYLPHOSPHATASE_2"/>
    <property type="match status" value="1"/>
</dbReference>
<dbReference type="PROSITE" id="PS51160">
    <property type="entry name" value="ACYLPHOSPHATASE_3"/>
    <property type="match status" value="1"/>
</dbReference>